<reference key="1">
    <citation type="submission" date="2007-07" db="EMBL/GenBank/DDBJ databases">
        <title>Complete genome sequence of Campylobacter hominis ATCC BAA-381, a commensal isolated from the human gastrointestinal tract.</title>
        <authorList>
            <person name="Fouts D.E."/>
            <person name="Mongodin E.F."/>
            <person name="Puiu D."/>
            <person name="Sebastian Y."/>
            <person name="Miller W.G."/>
            <person name="Mandrell R.E."/>
            <person name="Nelson K.E."/>
        </authorList>
    </citation>
    <scope>NUCLEOTIDE SEQUENCE [LARGE SCALE GENOMIC DNA]</scope>
    <source>
        <strain>ATCC BAA-381 / DSM 21671 / CCUG 45161 / LMG 19568 / NCTC 13146 / CH001A</strain>
    </source>
</reference>
<dbReference type="EC" id="2.7.4.6" evidence="1"/>
<dbReference type="EMBL" id="CP000776">
    <property type="protein sequence ID" value="ABS51153.1"/>
    <property type="molecule type" value="Genomic_DNA"/>
</dbReference>
<dbReference type="RefSeq" id="WP_012109327.1">
    <property type="nucleotide sequence ID" value="NC_009714.1"/>
</dbReference>
<dbReference type="SMR" id="A7I3D2"/>
<dbReference type="STRING" id="360107.CHAB381_1488"/>
<dbReference type="KEGG" id="cha:CHAB381_1488"/>
<dbReference type="eggNOG" id="COG0105">
    <property type="taxonomic scope" value="Bacteria"/>
</dbReference>
<dbReference type="HOGENOM" id="CLU_060216_8_1_7"/>
<dbReference type="OrthoDB" id="9801161at2"/>
<dbReference type="Proteomes" id="UP000002407">
    <property type="component" value="Chromosome"/>
</dbReference>
<dbReference type="GO" id="GO:0005737">
    <property type="term" value="C:cytoplasm"/>
    <property type="evidence" value="ECO:0007669"/>
    <property type="project" value="UniProtKB-SubCell"/>
</dbReference>
<dbReference type="GO" id="GO:0005524">
    <property type="term" value="F:ATP binding"/>
    <property type="evidence" value="ECO:0007669"/>
    <property type="project" value="UniProtKB-UniRule"/>
</dbReference>
<dbReference type="GO" id="GO:0046872">
    <property type="term" value="F:metal ion binding"/>
    <property type="evidence" value="ECO:0007669"/>
    <property type="project" value="UniProtKB-KW"/>
</dbReference>
<dbReference type="GO" id="GO:0004550">
    <property type="term" value="F:nucleoside diphosphate kinase activity"/>
    <property type="evidence" value="ECO:0007669"/>
    <property type="project" value="UniProtKB-UniRule"/>
</dbReference>
<dbReference type="GO" id="GO:0006241">
    <property type="term" value="P:CTP biosynthetic process"/>
    <property type="evidence" value="ECO:0007669"/>
    <property type="project" value="UniProtKB-UniRule"/>
</dbReference>
<dbReference type="GO" id="GO:0006183">
    <property type="term" value="P:GTP biosynthetic process"/>
    <property type="evidence" value="ECO:0007669"/>
    <property type="project" value="UniProtKB-UniRule"/>
</dbReference>
<dbReference type="GO" id="GO:0006228">
    <property type="term" value="P:UTP biosynthetic process"/>
    <property type="evidence" value="ECO:0007669"/>
    <property type="project" value="UniProtKB-UniRule"/>
</dbReference>
<dbReference type="CDD" id="cd04413">
    <property type="entry name" value="NDPk_I"/>
    <property type="match status" value="1"/>
</dbReference>
<dbReference type="FunFam" id="3.30.70.141:FF:000001">
    <property type="entry name" value="Nucleoside diphosphate kinase"/>
    <property type="match status" value="1"/>
</dbReference>
<dbReference type="Gene3D" id="3.30.70.141">
    <property type="entry name" value="Nucleoside diphosphate kinase-like domain"/>
    <property type="match status" value="1"/>
</dbReference>
<dbReference type="HAMAP" id="MF_00451">
    <property type="entry name" value="NDP_kinase"/>
    <property type="match status" value="1"/>
</dbReference>
<dbReference type="InterPro" id="IPR034907">
    <property type="entry name" value="NDK-like_dom"/>
</dbReference>
<dbReference type="InterPro" id="IPR036850">
    <property type="entry name" value="NDK-like_dom_sf"/>
</dbReference>
<dbReference type="InterPro" id="IPR001564">
    <property type="entry name" value="Nucleoside_diP_kinase"/>
</dbReference>
<dbReference type="InterPro" id="IPR023005">
    <property type="entry name" value="Nucleoside_diP_kinase_AS"/>
</dbReference>
<dbReference type="NCBIfam" id="NF001908">
    <property type="entry name" value="PRK00668.1"/>
    <property type="match status" value="1"/>
</dbReference>
<dbReference type="PANTHER" id="PTHR46161">
    <property type="entry name" value="NUCLEOSIDE DIPHOSPHATE KINASE"/>
    <property type="match status" value="1"/>
</dbReference>
<dbReference type="PANTHER" id="PTHR46161:SF3">
    <property type="entry name" value="NUCLEOSIDE DIPHOSPHATE KINASE DDB_G0292928-RELATED"/>
    <property type="match status" value="1"/>
</dbReference>
<dbReference type="Pfam" id="PF00334">
    <property type="entry name" value="NDK"/>
    <property type="match status" value="1"/>
</dbReference>
<dbReference type="PRINTS" id="PR01243">
    <property type="entry name" value="NUCDPKINASE"/>
</dbReference>
<dbReference type="SMART" id="SM00562">
    <property type="entry name" value="NDK"/>
    <property type="match status" value="1"/>
</dbReference>
<dbReference type="SUPFAM" id="SSF54919">
    <property type="entry name" value="Nucleoside diphosphate kinase, NDK"/>
    <property type="match status" value="1"/>
</dbReference>
<dbReference type="PROSITE" id="PS00469">
    <property type="entry name" value="NDPK"/>
    <property type="match status" value="1"/>
</dbReference>
<dbReference type="PROSITE" id="PS51374">
    <property type="entry name" value="NDPK_LIKE"/>
    <property type="match status" value="1"/>
</dbReference>
<gene>
    <name evidence="1" type="primary">ndk</name>
    <name type="ordered locus">CHAB381_1488</name>
</gene>
<comment type="function">
    <text evidence="1">Major role in the synthesis of nucleoside triphosphates other than ATP. The ATP gamma phosphate is transferred to the NDP beta phosphate via a ping-pong mechanism, using a phosphorylated active-site intermediate.</text>
</comment>
<comment type="catalytic activity">
    <reaction evidence="1">
        <text>a 2'-deoxyribonucleoside 5'-diphosphate + ATP = a 2'-deoxyribonucleoside 5'-triphosphate + ADP</text>
        <dbReference type="Rhea" id="RHEA:44640"/>
        <dbReference type="ChEBI" id="CHEBI:30616"/>
        <dbReference type="ChEBI" id="CHEBI:61560"/>
        <dbReference type="ChEBI" id="CHEBI:73316"/>
        <dbReference type="ChEBI" id="CHEBI:456216"/>
        <dbReference type="EC" id="2.7.4.6"/>
    </reaction>
</comment>
<comment type="catalytic activity">
    <reaction evidence="1">
        <text>a ribonucleoside 5'-diphosphate + ATP = a ribonucleoside 5'-triphosphate + ADP</text>
        <dbReference type="Rhea" id="RHEA:18113"/>
        <dbReference type="ChEBI" id="CHEBI:30616"/>
        <dbReference type="ChEBI" id="CHEBI:57930"/>
        <dbReference type="ChEBI" id="CHEBI:61557"/>
        <dbReference type="ChEBI" id="CHEBI:456216"/>
        <dbReference type="EC" id="2.7.4.6"/>
    </reaction>
</comment>
<comment type="cofactor">
    <cofactor evidence="1">
        <name>Mg(2+)</name>
        <dbReference type="ChEBI" id="CHEBI:18420"/>
    </cofactor>
</comment>
<comment type="subunit">
    <text evidence="1">Homotetramer.</text>
</comment>
<comment type="subcellular location">
    <subcellularLocation>
        <location evidence="1">Cytoplasm</location>
    </subcellularLocation>
</comment>
<comment type="similarity">
    <text evidence="1">Belongs to the NDK family.</text>
</comment>
<protein>
    <recommendedName>
        <fullName evidence="1">Nucleoside diphosphate kinase</fullName>
        <shortName evidence="1">NDK</shortName>
        <shortName evidence="1">NDP kinase</shortName>
        <ecNumber evidence="1">2.7.4.6</ecNumber>
    </recommendedName>
    <alternativeName>
        <fullName evidence="1">Nucleoside-2-P kinase</fullName>
    </alternativeName>
</protein>
<organism>
    <name type="scientific">Campylobacter hominis (strain ATCC BAA-381 / DSM 21671 / CCUG 45161 / LMG 19568 / NCTC 13146 / CH001A)</name>
    <dbReference type="NCBI Taxonomy" id="360107"/>
    <lineage>
        <taxon>Bacteria</taxon>
        <taxon>Pseudomonadati</taxon>
        <taxon>Campylobacterota</taxon>
        <taxon>Epsilonproteobacteria</taxon>
        <taxon>Campylobacterales</taxon>
        <taxon>Campylobacteraceae</taxon>
        <taxon>Campylobacter</taxon>
    </lineage>
</organism>
<proteinExistence type="inferred from homology"/>
<accession>A7I3D2</accession>
<evidence type="ECO:0000255" key="1">
    <source>
        <dbReference type="HAMAP-Rule" id="MF_00451"/>
    </source>
</evidence>
<name>NDK_CAMHC</name>
<sequence>MQQTLSIIKPDAVEKGVIGKIIDRFESAGLRIAAAKKIKLSKCDASQFYAIHKERSFFNDLVDYMTSGPVVVMVLEGENAVAKNRELMGATDPKKAAPGTIRADFAESIDANAVHGSDSEENAKNEIAFFFAGREIC</sequence>
<keyword id="KW-0067">ATP-binding</keyword>
<keyword id="KW-0963">Cytoplasm</keyword>
<keyword id="KW-0418">Kinase</keyword>
<keyword id="KW-0460">Magnesium</keyword>
<keyword id="KW-0479">Metal-binding</keyword>
<keyword id="KW-0546">Nucleotide metabolism</keyword>
<keyword id="KW-0547">Nucleotide-binding</keyword>
<keyword id="KW-0597">Phosphoprotein</keyword>
<keyword id="KW-1185">Reference proteome</keyword>
<keyword id="KW-0808">Transferase</keyword>
<feature type="chain" id="PRO_1000026223" description="Nucleoside diphosphate kinase">
    <location>
        <begin position="1"/>
        <end position="137"/>
    </location>
</feature>
<feature type="active site" description="Pros-phosphohistidine intermediate" evidence="1">
    <location>
        <position position="115"/>
    </location>
</feature>
<feature type="binding site" evidence="1">
    <location>
        <position position="9"/>
    </location>
    <ligand>
        <name>ATP</name>
        <dbReference type="ChEBI" id="CHEBI:30616"/>
    </ligand>
</feature>
<feature type="binding site" evidence="1">
    <location>
        <position position="57"/>
    </location>
    <ligand>
        <name>ATP</name>
        <dbReference type="ChEBI" id="CHEBI:30616"/>
    </ligand>
</feature>
<feature type="binding site" evidence="1">
    <location>
        <position position="85"/>
    </location>
    <ligand>
        <name>ATP</name>
        <dbReference type="ChEBI" id="CHEBI:30616"/>
    </ligand>
</feature>
<feature type="binding site" evidence="1">
    <location>
        <position position="91"/>
    </location>
    <ligand>
        <name>ATP</name>
        <dbReference type="ChEBI" id="CHEBI:30616"/>
    </ligand>
</feature>
<feature type="binding site" evidence="1">
    <location>
        <position position="102"/>
    </location>
    <ligand>
        <name>ATP</name>
        <dbReference type="ChEBI" id="CHEBI:30616"/>
    </ligand>
</feature>
<feature type="binding site" evidence="1">
    <location>
        <position position="112"/>
    </location>
    <ligand>
        <name>ATP</name>
        <dbReference type="ChEBI" id="CHEBI:30616"/>
    </ligand>
</feature>